<name>DDC1_YEAST</name>
<protein>
    <recommendedName>
        <fullName>DNA damage checkpoint protein 1</fullName>
    </recommendedName>
</protein>
<feature type="chain" id="PRO_0000239638" description="DNA damage checkpoint protein 1">
    <location>
        <begin position="1"/>
        <end position="612"/>
    </location>
</feature>
<feature type="region of interest" description="Disordered" evidence="1">
    <location>
        <begin position="576"/>
        <end position="612"/>
    </location>
</feature>
<feature type="compositionally biased region" description="Basic and acidic residues" evidence="1">
    <location>
        <begin position="585"/>
        <end position="596"/>
    </location>
</feature>
<feature type="modified residue" description="Phosphoserine" evidence="18">
    <location>
        <position position="436"/>
    </location>
</feature>
<feature type="strand" evidence="22">
    <location>
        <begin position="3"/>
        <end position="7"/>
    </location>
</feature>
<feature type="helix" evidence="22">
    <location>
        <begin position="10"/>
        <end position="26"/>
    </location>
</feature>
<feature type="strand" evidence="22">
    <location>
        <begin position="28"/>
        <end position="34"/>
    </location>
</feature>
<feature type="strand" evidence="22">
    <location>
        <begin position="36"/>
        <end position="44"/>
    </location>
</feature>
<feature type="strand" evidence="22">
    <location>
        <begin position="50"/>
        <end position="57"/>
    </location>
</feature>
<feature type="helix" evidence="22">
    <location>
        <begin position="58"/>
        <end position="60"/>
    </location>
</feature>
<feature type="strand" evidence="22">
    <location>
        <begin position="61"/>
        <end position="66"/>
    </location>
</feature>
<feature type="helix" evidence="22">
    <location>
        <begin position="68"/>
        <end position="70"/>
    </location>
</feature>
<feature type="helix" evidence="22">
    <location>
        <begin position="75"/>
        <end position="77"/>
    </location>
</feature>
<feature type="strand" evidence="22">
    <location>
        <begin position="78"/>
        <end position="82"/>
    </location>
</feature>
<feature type="strand" evidence="22">
    <location>
        <begin position="88"/>
        <end position="97"/>
    </location>
</feature>
<feature type="helix" evidence="22">
    <location>
        <begin position="98"/>
        <end position="105"/>
    </location>
</feature>
<feature type="strand" evidence="22">
    <location>
        <begin position="109"/>
        <end position="111"/>
    </location>
</feature>
<feature type="strand" evidence="22">
    <location>
        <begin position="113"/>
        <end position="120"/>
    </location>
</feature>
<feature type="strand" evidence="22">
    <location>
        <begin position="123"/>
        <end position="125"/>
    </location>
</feature>
<feature type="turn" evidence="22">
    <location>
        <begin position="128"/>
        <end position="132"/>
    </location>
</feature>
<feature type="strand" evidence="22">
    <location>
        <begin position="133"/>
        <end position="140"/>
    </location>
</feature>
<feature type="strand" evidence="19">
    <location>
        <begin position="141"/>
        <end position="143"/>
    </location>
</feature>
<feature type="strand" evidence="22">
    <location>
        <begin position="145"/>
        <end position="148"/>
    </location>
</feature>
<feature type="strand" evidence="22">
    <location>
        <begin position="153"/>
        <end position="155"/>
    </location>
</feature>
<feature type="helix" evidence="22">
    <location>
        <begin position="162"/>
        <end position="174"/>
    </location>
</feature>
<feature type="helix" evidence="22">
    <location>
        <begin position="189"/>
        <end position="204"/>
    </location>
</feature>
<feature type="strand" evidence="21">
    <location>
        <begin position="205"/>
        <end position="207"/>
    </location>
</feature>
<feature type="helix" evidence="22">
    <location>
        <begin position="223"/>
        <end position="225"/>
    </location>
</feature>
<feature type="strand" evidence="22">
    <location>
        <begin position="228"/>
        <end position="233"/>
    </location>
</feature>
<feature type="helix" evidence="22">
    <location>
        <begin position="234"/>
        <end position="242"/>
    </location>
</feature>
<feature type="turn" evidence="22">
    <location>
        <begin position="246"/>
        <end position="248"/>
    </location>
</feature>
<feature type="strand" evidence="22">
    <location>
        <begin position="251"/>
        <end position="256"/>
    </location>
</feature>
<feature type="strand" evidence="22">
    <location>
        <begin position="258"/>
        <end position="267"/>
    </location>
</feature>
<feature type="strand" evidence="20">
    <location>
        <begin position="273"/>
        <end position="275"/>
    </location>
</feature>
<feature type="strand" evidence="22">
    <location>
        <begin position="277"/>
        <end position="279"/>
    </location>
</feature>
<feature type="strand" evidence="22">
    <location>
        <begin position="282"/>
        <end position="289"/>
    </location>
</feature>
<feature type="turn" evidence="22">
    <location>
        <begin position="290"/>
        <end position="292"/>
    </location>
</feature>
<feature type="strand" evidence="22">
    <location>
        <begin position="293"/>
        <end position="297"/>
    </location>
</feature>
<feature type="strand" evidence="22">
    <location>
        <begin position="320"/>
        <end position="326"/>
    </location>
</feature>
<feature type="helix" evidence="22">
    <location>
        <begin position="327"/>
        <end position="332"/>
    </location>
</feature>
<feature type="turn" evidence="21">
    <location>
        <begin position="333"/>
        <end position="335"/>
    </location>
</feature>
<feature type="helix" evidence="22">
    <location>
        <begin position="336"/>
        <end position="338"/>
    </location>
</feature>
<feature type="strand" evidence="21">
    <location>
        <begin position="343"/>
        <end position="345"/>
    </location>
</feature>
<feature type="strand" evidence="22">
    <location>
        <begin position="348"/>
        <end position="353"/>
    </location>
</feature>
<feature type="strand" evidence="23">
    <location>
        <begin position="355"/>
        <end position="358"/>
    </location>
</feature>
<feature type="strand" evidence="22">
    <location>
        <begin position="360"/>
        <end position="366"/>
    </location>
</feature>
<feature type="strand" evidence="22">
    <location>
        <begin position="369"/>
        <end position="375"/>
    </location>
</feature>
<reference key="1">
    <citation type="journal article" date="1997" name="Nature">
        <title>The nucleotide sequence of Saccharomyces cerevisiae chromosome XVI.</title>
        <authorList>
            <person name="Bussey H."/>
            <person name="Storms R.K."/>
            <person name="Ahmed A."/>
            <person name="Albermann K."/>
            <person name="Allen E."/>
            <person name="Ansorge W."/>
            <person name="Araujo R."/>
            <person name="Aparicio A."/>
            <person name="Barrell B.G."/>
            <person name="Badcock K."/>
            <person name="Benes V."/>
            <person name="Botstein D."/>
            <person name="Bowman S."/>
            <person name="Brueckner M."/>
            <person name="Carpenter J."/>
            <person name="Cherry J.M."/>
            <person name="Chung E."/>
            <person name="Churcher C.M."/>
            <person name="Coster F."/>
            <person name="Davis K."/>
            <person name="Davis R.W."/>
            <person name="Dietrich F.S."/>
            <person name="Delius H."/>
            <person name="DiPaolo T."/>
            <person name="Dubois E."/>
            <person name="Duesterhoeft A."/>
            <person name="Duncan M."/>
            <person name="Floeth M."/>
            <person name="Fortin N."/>
            <person name="Friesen J.D."/>
            <person name="Fritz C."/>
            <person name="Goffeau A."/>
            <person name="Hall J."/>
            <person name="Hebling U."/>
            <person name="Heumann K."/>
            <person name="Hilbert H."/>
            <person name="Hillier L.W."/>
            <person name="Hunicke-Smith S."/>
            <person name="Hyman R.W."/>
            <person name="Johnston M."/>
            <person name="Kalman S."/>
            <person name="Kleine K."/>
            <person name="Komp C."/>
            <person name="Kurdi O."/>
            <person name="Lashkari D."/>
            <person name="Lew H."/>
            <person name="Lin A."/>
            <person name="Lin D."/>
            <person name="Louis E.J."/>
            <person name="Marathe R."/>
            <person name="Messenguy F."/>
            <person name="Mewes H.-W."/>
            <person name="Mirtipati S."/>
            <person name="Moestl D."/>
            <person name="Mueller-Auer S."/>
            <person name="Namath A."/>
            <person name="Nentwich U."/>
            <person name="Oefner P."/>
            <person name="Pearson D."/>
            <person name="Petel F.X."/>
            <person name="Pohl T.M."/>
            <person name="Purnelle B."/>
            <person name="Rajandream M.A."/>
            <person name="Rechmann S."/>
            <person name="Rieger M."/>
            <person name="Riles L."/>
            <person name="Roberts D."/>
            <person name="Schaefer M."/>
            <person name="Scharfe M."/>
            <person name="Scherens B."/>
            <person name="Schramm S."/>
            <person name="Schroeder M."/>
            <person name="Sdicu A.-M."/>
            <person name="Tettelin H."/>
            <person name="Urrestarazu L.A."/>
            <person name="Ushinsky S."/>
            <person name="Vierendeels F."/>
            <person name="Vissers S."/>
            <person name="Voss H."/>
            <person name="Walsh S.V."/>
            <person name="Wambutt R."/>
            <person name="Wang Y."/>
            <person name="Wedler E."/>
            <person name="Wedler H."/>
            <person name="Winnett E."/>
            <person name="Zhong W.-W."/>
            <person name="Zollner A."/>
            <person name="Vo D.H."/>
            <person name="Hani J."/>
        </authorList>
    </citation>
    <scope>NUCLEOTIDE SEQUENCE [LARGE SCALE GENOMIC DNA]</scope>
    <source>
        <strain>ATCC 204508 / S288c</strain>
    </source>
</reference>
<reference key="2">
    <citation type="journal article" date="2014" name="G3 (Bethesda)">
        <title>The reference genome sequence of Saccharomyces cerevisiae: Then and now.</title>
        <authorList>
            <person name="Engel S.R."/>
            <person name="Dietrich F.S."/>
            <person name="Fisk D.G."/>
            <person name="Binkley G."/>
            <person name="Balakrishnan R."/>
            <person name="Costanzo M.C."/>
            <person name="Dwight S.S."/>
            <person name="Hitz B.C."/>
            <person name="Karra K."/>
            <person name="Nash R.S."/>
            <person name="Weng S."/>
            <person name="Wong E.D."/>
            <person name="Lloyd P."/>
            <person name="Skrzypek M.S."/>
            <person name="Miyasato S.R."/>
            <person name="Simison M."/>
            <person name="Cherry J.M."/>
        </authorList>
    </citation>
    <scope>GENOME REANNOTATION</scope>
    <source>
        <strain>ATCC 204508 / S288c</strain>
    </source>
</reference>
<reference key="3">
    <citation type="journal article" date="1997" name="EMBO J.">
        <title>The novel DNA damage checkpoint protein ddc1p is phosphorylated periodically during the cell cycle and in response to DNA damage in budding yeast.</title>
        <authorList>
            <person name="Longhese M.P."/>
            <person name="Paciotti V."/>
            <person name="Fraschini R."/>
            <person name="Zaccarini R."/>
            <person name="Plevani P."/>
            <person name="Lucchini G."/>
        </authorList>
    </citation>
    <scope>FUNCTION</scope>
    <scope>PHOSPHORYLATION</scope>
</reference>
<reference key="4">
    <citation type="journal article" date="1998" name="EMBO J.">
        <title>Mec1p is essential for phosphorylation of the yeast DNA damage checkpoint protein Ddc1p, which physically interacts with Mec3p.</title>
        <authorList>
            <person name="Paciotti V."/>
            <person name="Lucchini G."/>
            <person name="Plevani P."/>
            <person name="Longhese M.P."/>
        </authorList>
    </citation>
    <scope>FUNCTION</scope>
    <scope>PHOSPHORYLATION</scope>
    <scope>INTERACTION WITH MEC3</scope>
</reference>
<reference key="5">
    <citation type="journal article" date="1999" name="EMBO J.">
        <title>Activation of Rad53 kinase in response to DNA damage and its effect in modulating phosphorylation of the lagging strand DNA polymerase.</title>
        <authorList>
            <person name="Pellicioli A."/>
            <person name="Lucca C."/>
            <person name="Liberi G."/>
            <person name="Marini F."/>
            <person name="Lopes M."/>
            <person name="Plevani P."/>
            <person name="Romano A."/>
            <person name="Di Fiore P.P."/>
            <person name="Foiani M."/>
        </authorList>
    </citation>
    <scope>FUNCTION</scope>
</reference>
<reference key="6">
    <citation type="journal article" date="1999" name="Mol. Cell. Biol.">
        <title>Role of a complex containing Rad17, Mec3, and Ddc1 in the yeast DNA damage checkpoint pathway.</title>
        <authorList>
            <person name="Kondo T."/>
            <person name="Matsumoto K."/>
            <person name="Sugimoto K."/>
        </authorList>
    </citation>
    <scope>IDENTIFICATION IN THE CHECKPOINT CLAMP COMPLEX</scope>
    <scope>FUNCTION OF THE CHECKPOINT CLAMP COMPLEX</scope>
</reference>
<reference key="7">
    <citation type="journal article" date="2002" name="Genes Dev.">
        <title>A role for Ddc1 in signaling meiotic double-strand breaks at the pachytene checkpoint.</title>
        <authorList>
            <person name="Hong E.-J.E."/>
            <person name="Roeder G.S."/>
        </authorList>
    </citation>
    <scope>FUNCTION</scope>
    <scope>PHOSPHORYLATION</scope>
    <scope>SUBCELLULAR LOCATION</scope>
</reference>
<reference key="8">
    <citation type="journal article" date="2002" name="Genetics">
        <title>Genetic and physical interactions between DPB11 and DDC1 in the yeast DNA damage response pathway.</title>
        <authorList>
            <person name="Wang H."/>
            <person name="Elledge S.J."/>
        </authorList>
    </citation>
    <scope>INTERACTION WITH DPB11</scope>
</reference>
<reference key="9">
    <citation type="journal article" date="2002" name="Proc. Natl. Acad. Sci. U.S.A.">
        <title>A dominant-negative MEC3 mutant uncovers new functions for the Rad17 complex and Tel1.</title>
        <authorList>
            <person name="Giannattasio M."/>
            <person name="Sommariva E."/>
            <person name="Vercillo R."/>
            <person name="Lippi-Boncambi F."/>
            <person name="Liberi G."/>
            <person name="Foiani M."/>
            <person name="Plevani P."/>
            <person name="Muzi-Falconi M."/>
        </authorList>
    </citation>
    <scope>FUNCTION OF THE CHECKPOINT CLAMP COMPLEX</scope>
</reference>
<reference key="10">
    <citation type="journal article" date="2003" name="J. Biol. Chem.">
        <title>Correlation between checkpoint activation and in vivo assembly of the yeast checkpoint complex Rad17-Mec3-Ddc1.</title>
        <authorList>
            <person name="Giannattasio M."/>
            <person name="Sabbioneda S."/>
            <person name="Minuzzo M."/>
            <person name="Plevani P."/>
            <person name="Muzi-Falconi M."/>
        </authorList>
    </citation>
    <scope>IDENTIFICATION IN THE CHECKPOINT CLAMP COMPLEX</scope>
    <scope>FUNCTION OF THE CHECKPOINT CLAMP COMPLEX</scope>
</reference>
<reference key="11">
    <citation type="journal article" date="2003" name="Nature">
        <title>Global analysis of protein localization in budding yeast.</title>
        <authorList>
            <person name="Huh W.-K."/>
            <person name="Falvo J.V."/>
            <person name="Gerke L.C."/>
            <person name="Carroll A.S."/>
            <person name="Howson R.W."/>
            <person name="Weissman J.S."/>
            <person name="O'Shea E.K."/>
        </authorList>
    </citation>
    <scope>SUBCELLULAR LOCATION [LARGE SCALE ANALYSIS]</scope>
</reference>
<reference key="12">
    <citation type="journal article" date="2003" name="Nature">
        <title>Global analysis of protein expression in yeast.</title>
        <authorList>
            <person name="Ghaemmaghami S."/>
            <person name="Huh W.-K."/>
            <person name="Bower K."/>
            <person name="Howson R.W."/>
            <person name="Belle A."/>
            <person name="Dephoure N."/>
            <person name="O'Shea E.K."/>
            <person name="Weissman J.S."/>
        </authorList>
    </citation>
    <scope>LEVEL OF PROTEIN EXPRESSION [LARGE SCALE ANALYSIS]</scope>
</reference>
<reference key="13">
    <citation type="journal article" date="2003" name="Nature">
        <title>Targets of the cyclin-dependent kinase Cdk1.</title>
        <authorList>
            <person name="Ubersax J.A."/>
            <person name="Woodbury E.L."/>
            <person name="Quang P.N."/>
            <person name="Paraz M."/>
            <person name="Blethrow J.D."/>
            <person name="Shah K."/>
            <person name="Shokat K.M."/>
            <person name="Morgan D.O."/>
        </authorList>
    </citation>
    <scope>PHOSPHORYLATION BY CDC28</scope>
</reference>
<reference key="14">
    <citation type="journal article" date="2003" name="Proc. Natl. Acad. Sci. U.S.A.">
        <title>Yeast Rad17/Mec3/Ddc1: a sliding clamp for the DNA damage checkpoint.</title>
        <authorList>
            <person name="Majka J."/>
            <person name="Burgers P.M.J."/>
        </authorList>
    </citation>
    <scope>INTERACTION OF THE CHECKPOINT CLAMP COMPLEX WITH THE RFC-RAD24 CHECKPOINT CLAMP LOADER COMPLEX</scope>
    <scope>FUNCTION OF THE CHECKPOINT CLAMP COMPLEX</scope>
</reference>
<reference key="15">
    <citation type="journal article" date="2004" name="J. Biol. Chem.">
        <title>Requirement for ATP by the DNA damage checkpoint clamp loader.</title>
        <authorList>
            <person name="Majka J."/>
            <person name="Chung B.Y."/>
            <person name="Burgers P.M.J."/>
        </authorList>
    </citation>
    <scope>INTERACTION OF THE CHECKPOINT CLAMP COMPLEX WITH THE RFC-RAD24 CHECKPOINT CLAMP LOADER COMPLEX</scope>
</reference>
<reference key="16">
    <citation type="journal article" date="2005" name="DNA Repair">
        <title>Function of Rad17/Mec3/Ddc1 and its partial complexes in the DNA damage checkpoint.</title>
        <authorList>
            <person name="Majka J."/>
            <person name="Burgers P.M.J."/>
        </authorList>
    </citation>
    <scope>IDENTIFICATION IN THE CHECKPOINT CLAMP COMPLEX</scope>
    <scope>FUNCTION OF THE CHECKPOINT CLAMP COMPLEX</scope>
</reference>
<reference key="17">
    <citation type="journal article" date="2005" name="J. Biol. Chem.">
        <title>The 9-1-1 checkpoint clamp physically interacts with polzeta and is partially required for spontaneous polzeta-dependent mutagenesis in Saccharomyces cerevisiae.</title>
        <authorList>
            <person name="Sabbioneda S."/>
            <person name="Minesinger B.K."/>
            <person name="Giannattasio M."/>
            <person name="Plevani P."/>
            <person name="Muzi-Falconi M."/>
            <person name="Jinks-Robertson S."/>
        </authorList>
    </citation>
    <scope>INTERACTION WITH REV7</scope>
    <scope>FUNCTION OF THE CHECKPOINT CLAMP COMPLEX</scope>
</reference>
<reference key="18">
    <citation type="journal article" date="2006" name="DNA Repair">
        <title>Psoralen-sensitive mutant pso9-1 of Saccharomyces cerevisiae contains a mutant allele of the DNA damage checkpoint gene MEC3.</title>
        <authorList>
            <person name="Cardone J.M."/>
            <person name="Revers L.F."/>
            <person name="Machado R.M."/>
            <person name="Bonatto D."/>
            <person name="Brendel M."/>
            <person name="Henriques J.A.P."/>
        </authorList>
    </citation>
    <scope>INTERACTION WITH MEC3 AND RAD17</scope>
</reference>
<reference key="19">
    <citation type="journal article" date="2007" name="Proc. Natl. Acad. Sci. U.S.A.">
        <title>Analysis of phosphorylation sites on proteins from Saccharomyces cerevisiae by electron transfer dissociation (ETD) mass spectrometry.</title>
        <authorList>
            <person name="Chi A."/>
            <person name="Huttenhower C."/>
            <person name="Geer L.Y."/>
            <person name="Coon J.J."/>
            <person name="Syka J.E.P."/>
            <person name="Bai D.L."/>
            <person name="Shabanowitz J."/>
            <person name="Burke D.J."/>
            <person name="Troyanskaya O.G."/>
            <person name="Hunt D.F."/>
        </authorList>
    </citation>
    <scope>PHOSPHORYLATION [LARGE SCALE ANALYSIS] AT SER-436</scope>
    <scope>IDENTIFICATION BY MASS SPECTROMETRY [LARGE SCALE ANALYSIS]</scope>
</reference>
<evidence type="ECO:0000256" key="1">
    <source>
        <dbReference type="SAM" id="MobiDB-lite"/>
    </source>
</evidence>
<evidence type="ECO:0000269" key="2">
    <source>
    </source>
</evidence>
<evidence type="ECO:0000269" key="3">
    <source>
    </source>
</evidence>
<evidence type="ECO:0000269" key="4">
    <source>
    </source>
</evidence>
<evidence type="ECO:0000269" key="5">
    <source>
    </source>
</evidence>
<evidence type="ECO:0000269" key="6">
    <source>
    </source>
</evidence>
<evidence type="ECO:0000269" key="7">
    <source>
    </source>
</evidence>
<evidence type="ECO:0000269" key="8">
    <source>
    </source>
</evidence>
<evidence type="ECO:0000269" key="9">
    <source>
    </source>
</evidence>
<evidence type="ECO:0000269" key="10">
    <source>
    </source>
</evidence>
<evidence type="ECO:0000269" key="11">
    <source>
    </source>
</evidence>
<evidence type="ECO:0000269" key="12">
    <source>
    </source>
</evidence>
<evidence type="ECO:0000269" key="13">
    <source>
    </source>
</evidence>
<evidence type="ECO:0000269" key="14">
    <source>
    </source>
</evidence>
<evidence type="ECO:0000269" key="15">
    <source>
    </source>
</evidence>
<evidence type="ECO:0000269" key="16">
    <source>
    </source>
</evidence>
<evidence type="ECO:0000305" key="17"/>
<evidence type="ECO:0007744" key="18">
    <source>
    </source>
</evidence>
<evidence type="ECO:0007829" key="19">
    <source>
        <dbReference type="PDB" id="7SGZ"/>
    </source>
</evidence>
<evidence type="ECO:0007829" key="20">
    <source>
        <dbReference type="PDB" id="7SH2"/>
    </source>
</evidence>
<evidence type="ECO:0007829" key="21">
    <source>
        <dbReference type="PDB" id="7STB"/>
    </source>
</evidence>
<evidence type="ECO:0007829" key="22">
    <source>
        <dbReference type="PDB" id="8DQW"/>
    </source>
</evidence>
<evidence type="ECO:0007829" key="23">
    <source>
        <dbReference type="PDB" id="8FS7"/>
    </source>
</evidence>
<organism>
    <name type="scientific">Saccharomyces cerevisiae (strain ATCC 204508 / S288c)</name>
    <name type="common">Baker's yeast</name>
    <dbReference type="NCBI Taxonomy" id="559292"/>
    <lineage>
        <taxon>Eukaryota</taxon>
        <taxon>Fungi</taxon>
        <taxon>Dikarya</taxon>
        <taxon>Ascomycota</taxon>
        <taxon>Saccharomycotina</taxon>
        <taxon>Saccharomycetes</taxon>
        <taxon>Saccharomycetales</taxon>
        <taxon>Saccharomycetaceae</taxon>
        <taxon>Saccharomyces</taxon>
    </lineage>
</organism>
<accession>Q08949</accession>
<accession>D6W3H4</accession>
<sequence>MSFKATITESGKQNIWFRAIYVLSTIQDDIKITVTTNELIAWSMNETDTTLCQVRFQKSFFEEYEFKPHEIVFGENGVQVIEDTYGNSHKLYSFRVNGRHLTTISRKPDGDGIKSFTIAVNNTSTCPESLANRLIVVIEMDSLIVKEYCPQFQPIKYDPIIINLKYKRRFLDVFGTAASDRNPQEPLDPKLLDVFTNTERELTSALFNEEVESDIRKRNQLTAADEINYICCNSTLLKNFLDNCNVNVTDEVKLEINVHRLSITAFTKAVYGKNNDLLRNALSMSNTISTLDLEHYCLFTTIEDEKQDKRSHSKRREHMKSIIFKLKDFKNFITIGPSWKTTQDGNDNISLWFCHPGDPILMQMQKPGVKLELVEVTDSNINDDILEGKFIKTAISGSKEEAGLKDNKESCESPLKSKTALKRENLPHSVAGTRNSPLKVSYLTPDNGSTVAKTYRNNTARKLFVEEQSQSTNYEQDKRFRQASSVHMNMNREQSFDIGTTHEVACPRNESNSLKRSIADICNETEDPTQQSTFAKRADTTVTWGKALPAADDEVSCSNIDRKGMLKKEKLKHMQGLLNSQNDTSNHKKQDNKEMEDGLGLTQVEKPRGIFD</sequence>
<gene>
    <name type="primary">DDC1</name>
    <name type="ordered locus">YPL194W</name>
</gene>
<comment type="function">
    <text evidence="2 3 5 6 7 11 12 14 15 16">Component of the checkpoint clamp complex involved in the surveillance mechanism that allows the DNA repair pathways to act to restore the integrity of the DNA prior to DNA synthesis or separation of the replicated chromosomes. Associates with sites of DNA damage and modulates the MEC1 signaling pathway and the activation of RAD53 in response to DNA damage at phase G1. The complex also physically regulates DNA polymerase zeta-dependent mutagenesis by controlling the access of polymerase zeta to damaged DNA.</text>
</comment>
<comment type="subunit">
    <text evidence="4 6 7 10 11 12 13 15 16">Component of the checkpoint clamp complex composed of DDC1, MEC3 and RAD17. The interaction with MEC3 is performed in a RAD17-dependent manner. The checkpoint clamp complex loads onto DNA in an ATP-dependent manner through its interaction with the RFC-RAD4 checkpoint clamp loader complex. Interacts with the DNA polymerase zeta subunit REV7 and DPB11.</text>
</comment>
<comment type="interaction">
    <interactant intactId="EBI-30769">
        <id>Q08949</id>
    </interactant>
    <interactant intactId="EBI-10658">
        <id>Q02574</id>
        <label>MEC3</label>
    </interactant>
    <organismsDiffer>false</organismsDiffer>
    <experiments>5</experiments>
</comment>
<comment type="interaction">
    <interactant intactId="EBI-30769">
        <id>Q08949</id>
    </interactant>
    <interactant intactId="EBI-14652">
        <id>P48581</id>
        <label>RAD17</label>
    </interactant>
    <organismsDiffer>false</organismsDiffer>
    <experiments>4</experiments>
</comment>
<comment type="interaction">
    <interactant intactId="EBI-30769">
        <id>Q08949</id>
    </interactant>
    <interactant intactId="EBI-14960">
        <id>P38927</id>
        <label>REV7</label>
    </interactant>
    <organismsDiffer>false</organismsDiffer>
    <experiments>3</experiments>
</comment>
<comment type="subcellular location">
    <subcellularLocation>
        <location>Cytoplasm</location>
    </subcellularLocation>
    <subcellularLocation>
        <location>Nucleus</location>
    </subcellularLocation>
</comment>
<comment type="PTM">
    <text evidence="3 9 14 15">Phosphorylated during cell cycle S-phase and in response to DNA damage. This phosphorylation is MEC14 dependent. Also hosphorylated by CDC28.</text>
</comment>
<comment type="miscellaneous">
    <text evidence="8">Present with 238 molecules/cell in log phase SD medium.</text>
</comment>
<comment type="similarity">
    <text evidence="17">Belongs to the DDC1 family.</text>
</comment>
<keyword id="KW-0002">3D-structure</keyword>
<keyword id="KW-0963">Cytoplasm</keyword>
<keyword id="KW-0227">DNA damage</keyword>
<keyword id="KW-0234">DNA repair</keyword>
<keyword id="KW-0238">DNA-binding</keyword>
<keyword id="KW-0539">Nucleus</keyword>
<keyword id="KW-0597">Phosphoprotein</keyword>
<keyword id="KW-1185">Reference proteome</keyword>
<dbReference type="EMBL" id="Z73550">
    <property type="protein sequence ID" value="CAA97907.1"/>
    <property type="molecule type" value="Genomic_DNA"/>
</dbReference>
<dbReference type="EMBL" id="BK006949">
    <property type="protein sequence ID" value="DAA11240.1"/>
    <property type="molecule type" value="Genomic_DNA"/>
</dbReference>
<dbReference type="PIR" id="S65213">
    <property type="entry name" value="S65213"/>
</dbReference>
<dbReference type="RefSeq" id="NP_015130.1">
    <property type="nucleotide sequence ID" value="NM_001184008.1"/>
</dbReference>
<dbReference type="PDB" id="7SGZ">
    <property type="method" value="EM"/>
    <property type="resolution" value="3.17 A"/>
    <property type="chains" value="H=1-612"/>
</dbReference>
<dbReference type="PDB" id="7SH2">
    <property type="method" value="EM"/>
    <property type="resolution" value="3.23 A"/>
    <property type="chains" value="H=1-612"/>
</dbReference>
<dbReference type="PDB" id="7ST9">
    <property type="method" value="EM"/>
    <property type="resolution" value="2.20 A"/>
    <property type="chains" value="G=1-612"/>
</dbReference>
<dbReference type="PDB" id="7STB">
    <property type="method" value="EM"/>
    <property type="resolution" value="2.72 A"/>
    <property type="chains" value="G=1-612"/>
</dbReference>
<dbReference type="PDB" id="8DQW">
    <property type="method" value="EM"/>
    <property type="resolution" value="2.10 A"/>
    <property type="chains" value="G=1-612"/>
</dbReference>
<dbReference type="PDB" id="8FS3">
    <property type="method" value="EM"/>
    <property type="resolution" value="2.93 A"/>
    <property type="chains" value="H=1-612"/>
</dbReference>
<dbReference type="PDB" id="8FS4">
    <property type="method" value="EM"/>
    <property type="resolution" value="2.94 A"/>
    <property type="chains" value="H=1-612"/>
</dbReference>
<dbReference type="PDB" id="8FS5">
    <property type="method" value="EM"/>
    <property type="resolution" value="2.76 A"/>
    <property type="chains" value="H=1-612"/>
</dbReference>
<dbReference type="PDB" id="8FS6">
    <property type="method" value="EM"/>
    <property type="resolution" value="2.90 A"/>
    <property type="chains" value="H=1-612"/>
</dbReference>
<dbReference type="PDB" id="8FS7">
    <property type="method" value="EM"/>
    <property type="resolution" value="2.85 A"/>
    <property type="chains" value="H=1-612"/>
</dbReference>
<dbReference type="PDB" id="8FS8">
    <property type="method" value="EM"/>
    <property type="resolution" value="3.04 A"/>
    <property type="chains" value="H=1-612"/>
</dbReference>
<dbReference type="PDBsum" id="7SGZ"/>
<dbReference type="PDBsum" id="7SH2"/>
<dbReference type="PDBsum" id="7ST9"/>
<dbReference type="PDBsum" id="7STB"/>
<dbReference type="PDBsum" id="8DQW"/>
<dbReference type="PDBsum" id="8FS3"/>
<dbReference type="PDBsum" id="8FS4"/>
<dbReference type="PDBsum" id="8FS5"/>
<dbReference type="PDBsum" id="8FS6"/>
<dbReference type="PDBsum" id="8FS7"/>
<dbReference type="PDBsum" id="8FS8"/>
<dbReference type="EMDB" id="EMD-25122"/>
<dbReference type="EMDB" id="EMD-25422"/>
<dbReference type="EMDB" id="EMD-25423"/>
<dbReference type="SMR" id="Q08949"/>
<dbReference type="BioGRID" id="35989">
    <property type="interactions" value="230"/>
</dbReference>
<dbReference type="ComplexPortal" id="CPX-1806">
    <property type="entry name" value="Rad17-Mec3-Ddc1 checkpoint clamp complex"/>
</dbReference>
<dbReference type="DIP" id="DIP-2323N"/>
<dbReference type="FunCoup" id="Q08949">
    <property type="interactions" value="248"/>
</dbReference>
<dbReference type="IntAct" id="Q08949">
    <property type="interactions" value="13"/>
</dbReference>
<dbReference type="MINT" id="Q08949"/>
<dbReference type="STRING" id="4932.YPL194W"/>
<dbReference type="iPTMnet" id="Q08949"/>
<dbReference type="PaxDb" id="4932-YPL194W"/>
<dbReference type="PeptideAtlas" id="Q08949"/>
<dbReference type="EnsemblFungi" id="YPL194W_mRNA">
    <property type="protein sequence ID" value="YPL194W"/>
    <property type="gene ID" value="YPL194W"/>
</dbReference>
<dbReference type="GeneID" id="855907"/>
<dbReference type="KEGG" id="sce:YPL194W"/>
<dbReference type="AGR" id="SGD:S000006115"/>
<dbReference type="SGD" id="S000006115">
    <property type="gene designation" value="DDC1"/>
</dbReference>
<dbReference type="VEuPathDB" id="FungiDB:YPL194W"/>
<dbReference type="eggNOG" id="ENOG502QT39">
    <property type="taxonomic scope" value="Eukaryota"/>
</dbReference>
<dbReference type="HOGENOM" id="CLU_490204_0_0_1"/>
<dbReference type="InParanoid" id="Q08949"/>
<dbReference type="OMA" id="EHYCLFT"/>
<dbReference type="OrthoDB" id="3992718at2759"/>
<dbReference type="BioCyc" id="YEAST:G3O-34087-MONOMER"/>
<dbReference type="Reactome" id="R-SCE-176187">
    <property type="pathway name" value="Activation of ATR in response to replication stress"/>
</dbReference>
<dbReference type="BioGRID-ORCS" id="855907">
    <property type="hits" value="0 hits in 10 CRISPR screens"/>
</dbReference>
<dbReference type="PRO" id="PR:Q08949"/>
<dbReference type="Proteomes" id="UP000002311">
    <property type="component" value="Chromosome XVI"/>
</dbReference>
<dbReference type="RNAct" id="Q08949">
    <property type="molecule type" value="protein"/>
</dbReference>
<dbReference type="GO" id="GO:0030896">
    <property type="term" value="C:checkpoint clamp complex"/>
    <property type="evidence" value="ECO:0000314"/>
    <property type="project" value="SGD"/>
</dbReference>
<dbReference type="GO" id="GO:0000794">
    <property type="term" value="C:condensed nuclear chromosome"/>
    <property type="evidence" value="ECO:0000314"/>
    <property type="project" value="SGD"/>
</dbReference>
<dbReference type="GO" id="GO:0005737">
    <property type="term" value="C:cytoplasm"/>
    <property type="evidence" value="ECO:0007669"/>
    <property type="project" value="UniProtKB-SubCell"/>
</dbReference>
<dbReference type="GO" id="GO:0005634">
    <property type="term" value="C:nucleus"/>
    <property type="evidence" value="ECO:0007005"/>
    <property type="project" value="SGD"/>
</dbReference>
<dbReference type="GO" id="GO:0003677">
    <property type="term" value="F:DNA binding"/>
    <property type="evidence" value="ECO:0007669"/>
    <property type="project" value="UniProtKB-KW"/>
</dbReference>
<dbReference type="GO" id="GO:0030295">
    <property type="term" value="F:protein kinase activator activity"/>
    <property type="evidence" value="ECO:0000314"/>
    <property type="project" value="SGD"/>
</dbReference>
<dbReference type="GO" id="GO:0071479">
    <property type="term" value="P:cellular response to ionizing radiation"/>
    <property type="evidence" value="ECO:0000318"/>
    <property type="project" value="GO_Central"/>
</dbReference>
<dbReference type="GO" id="GO:0000077">
    <property type="term" value="P:DNA damage checkpoint signaling"/>
    <property type="evidence" value="ECO:0000314"/>
    <property type="project" value="ComplexPortal"/>
</dbReference>
<dbReference type="GO" id="GO:0006281">
    <property type="term" value="P:DNA repair"/>
    <property type="evidence" value="ECO:0000318"/>
    <property type="project" value="GO_Central"/>
</dbReference>
<dbReference type="GO" id="GO:0000076">
    <property type="term" value="P:DNA replication checkpoint signaling"/>
    <property type="evidence" value="ECO:0000318"/>
    <property type="project" value="GO_Central"/>
</dbReference>
<dbReference type="GO" id="GO:0051321">
    <property type="term" value="P:meiotic cell cycle"/>
    <property type="evidence" value="ECO:0000315"/>
    <property type="project" value="SGD"/>
</dbReference>
<dbReference type="GO" id="GO:0051598">
    <property type="term" value="P:meiotic recombination checkpoint signaling"/>
    <property type="evidence" value="ECO:0000315"/>
    <property type="project" value="SGD"/>
</dbReference>
<dbReference type="GO" id="GO:0031571">
    <property type="term" value="P:mitotic G1 DNA damage checkpoint signaling"/>
    <property type="evidence" value="ECO:0000315"/>
    <property type="project" value="SGD"/>
</dbReference>
<dbReference type="GO" id="GO:0007095">
    <property type="term" value="P:mitotic G2 DNA damage checkpoint signaling"/>
    <property type="evidence" value="ECO:0000315"/>
    <property type="project" value="SGD"/>
</dbReference>
<dbReference type="GO" id="GO:0031573">
    <property type="term" value="P:mitotic intra-S DNA damage checkpoint signaling"/>
    <property type="evidence" value="ECO:0000315"/>
    <property type="project" value="SGD"/>
</dbReference>
<dbReference type="GO" id="GO:0000725">
    <property type="term" value="P:recombinational repair"/>
    <property type="evidence" value="ECO:0000314"/>
    <property type="project" value="SGD"/>
</dbReference>
<dbReference type="FunFam" id="3.70.10.10:FF:000021">
    <property type="entry name" value="DNA damage checkpoint"/>
    <property type="match status" value="1"/>
</dbReference>
<dbReference type="Gene3D" id="3.70.10.10">
    <property type="match status" value="1"/>
</dbReference>
<dbReference type="InterPro" id="IPR026217">
    <property type="entry name" value="Ddc1"/>
</dbReference>
<dbReference type="InterPro" id="IPR046938">
    <property type="entry name" value="DNA_clamp_sf"/>
</dbReference>
<dbReference type="InterPro" id="IPR007268">
    <property type="entry name" value="Rad9/Ddc1"/>
</dbReference>
<dbReference type="PANTHER" id="PTHR15237:SF0">
    <property type="entry name" value="CELL CYCLE CHECKPOINT CONTROL PROTEIN"/>
    <property type="match status" value="1"/>
</dbReference>
<dbReference type="PANTHER" id="PTHR15237">
    <property type="entry name" value="DNA REPAIR PROTEIN RAD9"/>
    <property type="match status" value="1"/>
</dbReference>
<dbReference type="PRINTS" id="PR02063">
    <property type="entry name" value="DNADAMAGECP1"/>
</dbReference>
<dbReference type="SUPFAM" id="SSF55979">
    <property type="entry name" value="DNA clamp"/>
    <property type="match status" value="1"/>
</dbReference>
<proteinExistence type="evidence at protein level"/>